<dbReference type="EMBL" id="CP001063">
    <property type="protein sequence ID" value="ACD08876.1"/>
    <property type="molecule type" value="Genomic_DNA"/>
</dbReference>
<dbReference type="RefSeq" id="WP_000460675.1">
    <property type="nucleotide sequence ID" value="NC_010658.1"/>
</dbReference>
<dbReference type="SMR" id="B2U2Q2"/>
<dbReference type="STRING" id="344609.SbBS512_E3669"/>
<dbReference type="KEGG" id="sbc:SbBS512_E3669"/>
<dbReference type="HOGENOM" id="CLU_133242_0_0_6"/>
<dbReference type="Proteomes" id="UP000001030">
    <property type="component" value="Chromosome"/>
</dbReference>
<dbReference type="HAMAP" id="MF_00598">
    <property type="entry name" value="Smg"/>
    <property type="match status" value="1"/>
</dbReference>
<dbReference type="InterPro" id="IPR007456">
    <property type="entry name" value="Smg"/>
</dbReference>
<dbReference type="NCBIfam" id="NF002897">
    <property type="entry name" value="PRK03430.1"/>
    <property type="match status" value="1"/>
</dbReference>
<dbReference type="PANTHER" id="PTHR38692">
    <property type="entry name" value="PROTEIN SMG"/>
    <property type="match status" value="1"/>
</dbReference>
<dbReference type="PANTHER" id="PTHR38692:SF1">
    <property type="entry name" value="PROTEIN SMG"/>
    <property type="match status" value="1"/>
</dbReference>
<dbReference type="Pfam" id="PF04361">
    <property type="entry name" value="DUF494"/>
    <property type="match status" value="1"/>
</dbReference>
<evidence type="ECO:0000255" key="1">
    <source>
        <dbReference type="HAMAP-Rule" id="MF_00598"/>
    </source>
</evidence>
<accession>B2U2Q2</accession>
<keyword id="KW-1185">Reference proteome</keyword>
<comment type="similarity">
    <text evidence="1">Belongs to the Smg family.</text>
</comment>
<name>SMG_SHIB3</name>
<feature type="chain" id="PRO_1000129907" description="Protein Smg">
    <location>
        <begin position="1"/>
        <end position="157"/>
    </location>
</feature>
<reference key="1">
    <citation type="submission" date="2008-05" db="EMBL/GenBank/DDBJ databases">
        <title>Complete sequence of Shigella boydii serotype 18 strain BS512.</title>
        <authorList>
            <person name="Rasko D.A."/>
            <person name="Rosovitz M."/>
            <person name="Maurelli A.T."/>
            <person name="Myers G."/>
            <person name="Seshadri R."/>
            <person name="Cer R."/>
            <person name="Jiang L."/>
            <person name="Ravel J."/>
            <person name="Sebastian Y."/>
        </authorList>
    </citation>
    <scope>NUCLEOTIDE SEQUENCE [LARGE SCALE GENOMIC DNA]</scope>
    <source>
        <strain>CDC 3083-94 / BS512</strain>
    </source>
</reference>
<gene>
    <name evidence="1" type="primary">smg</name>
    <name type="ordered locus">SbBS512_E3669</name>
</gene>
<proteinExistence type="inferred from homology"/>
<sequence>MFDVLMYLFETYIHTEAELRVDQDKLEQDLTDAGFDREDIYNALLWLEKLADYQEGLTEPMQLASDPLSMRIYTPEECERLDASCRGFLLFLEQIQVLNLEIREMVIERVLALDTAEFDLEDLKWVILMVLFNIPGCENAYQQMEELLFEVNEGMLH</sequence>
<organism>
    <name type="scientific">Shigella boydii serotype 18 (strain CDC 3083-94 / BS512)</name>
    <dbReference type="NCBI Taxonomy" id="344609"/>
    <lineage>
        <taxon>Bacteria</taxon>
        <taxon>Pseudomonadati</taxon>
        <taxon>Pseudomonadota</taxon>
        <taxon>Gammaproteobacteria</taxon>
        <taxon>Enterobacterales</taxon>
        <taxon>Enterobacteriaceae</taxon>
        <taxon>Shigella</taxon>
    </lineage>
</organism>
<protein>
    <recommendedName>
        <fullName evidence="1">Protein Smg</fullName>
    </recommendedName>
</protein>